<feature type="chain" id="PRO_0000349290" description="Putative HERC2-like protein 3">
    <location>
        <begin position="1"/>
        <end position="1158"/>
    </location>
</feature>
<feature type="domain" description="MIB/HERC2" evidence="1">
    <location>
        <begin position="587"/>
        <end position="660"/>
    </location>
</feature>
<feature type="region of interest" description="Disordered" evidence="2">
    <location>
        <begin position="281"/>
        <end position="302"/>
    </location>
</feature>
<feature type="region of interest" description="Disordered" evidence="2">
    <location>
        <begin position="662"/>
        <end position="684"/>
    </location>
</feature>
<feature type="compositionally biased region" description="Acidic residues" evidence="2">
    <location>
        <begin position="293"/>
        <end position="302"/>
    </location>
</feature>
<feature type="compositionally biased region" description="Acidic residues" evidence="2">
    <location>
        <begin position="668"/>
        <end position="679"/>
    </location>
</feature>
<feature type="sequence variant" id="VAR_046344" description="In dbSNP:rs17134681.">
    <original>L</original>
    <variation>P</variation>
    <location>
        <position position="759"/>
    </location>
</feature>
<feature type="sequence variant" id="VAR_046345" description="In dbSNP:rs4931826.">
    <original>R</original>
    <variation>I</variation>
    <location>
        <position position="1119"/>
    </location>
</feature>
<feature type="sequence conflict" description="In Ref. 2; BC070076." evidence="3" ref="2">
    <original>I</original>
    <variation>V</variation>
    <location>
        <position position="278"/>
    </location>
</feature>
<accession>Q9BVR0</accession>
<name>HRC23_HUMAN</name>
<protein>
    <recommendedName>
        <fullName>Putative HERC2-like protein 3</fullName>
    </recommendedName>
</protein>
<reference key="1">
    <citation type="journal article" date="2006" name="Nature">
        <title>Analysis of the DNA sequence and duplication history of human chromosome 15.</title>
        <authorList>
            <person name="Zody M.C."/>
            <person name="Garber M."/>
            <person name="Sharpe T."/>
            <person name="Young S.K."/>
            <person name="Rowen L."/>
            <person name="O'Neill K."/>
            <person name="Whittaker C.A."/>
            <person name="Kamal M."/>
            <person name="Chang J.L."/>
            <person name="Cuomo C.A."/>
            <person name="Dewar K."/>
            <person name="FitzGerald M.G."/>
            <person name="Kodira C.D."/>
            <person name="Madan A."/>
            <person name="Qin S."/>
            <person name="Yang X."/>
            <person name="Abbasi N."/>
            <person name="Abouelleil A."/>
            <person name="Arachchi H.M."/>
            <person name="Baradarani L."/>
            <person name="Birditt B."/>
            <person name="Bloom S."/>
            <person name="Bloom T."/>
            <person name="Borowsky M.L."/>
            <person name="Burke J."/>
            <person name="Butler J."/>
            <person name="Cook A."/>
            <person name="DeArellano K."/>
            <person name="DeCaprio D."/>
            <person name="Dorris L. III"/>
            <person name="Dors M."/>
            <person name="Eichler E.E."/>
            <person name="Engels R."/>
            <person name="Fahey J."/>
            <person name="Fleetwood P."/>
            <person name="Friedman C."/>
            <person name="Gearin G."/>
            <person name="Hall J.L."/>
            <person name="Hensley G."/>
            <person name="Johnson E."/>
            <person name="Jones C."/>
            <person name="Kamat A."/>
            <person name="Kaur A."/>
            <person name="Locke D.P."/>
            <person name="Madan A."/>
            <person name="Munson G."/>
            <person name="Jaffe D.B."/>
            <person name="Lui A."/>
            <person name="Macdonald P."/>
            <person name="Mauceli E."/>
            <person name="Naylor J.W."/>
            <person name="Nesbitt R."/>
            <person name="Nicol R."/>
            <person name="O'Leary S.B."/>
            <person name="Ratcliffe A."/>
            <person name="Rounsley S."/>
            <person name="She X."/>
            <person name="Sneddon K.M.B."/>
            <person name="Stewart S."/>
            <person name="Sougnez C."/>
            <person name="Stone S.M."/>
            <person name="Topham K."/>
            <person name="Vincent D."/>
            <person name="Wang S."/>
            <person name="Zimmer A.R."/>
            <person name="Birren B.W."/>
            <person name="Hood L."/>
            <person name="Lander E.S."/>
            <person name="Nusbaum C."/>
        </authorList>
    </citation>
    <scope>NUCLEOTIDE SEQUENCE [LARGE SCALE GENOMIC DNA]</scope>
</reference>
<reference key="2">
    <citation type="journal article" date="2004" name="Genome Res.">
        <title>The status, quality, and expansion of the NIH full-length cDNA project: the Mammalian Gene Collection (MGC).</title>
        <authorList>
            <consortium name="The MGC Project Team"/>
        </authorList>
    </citation>
    <scope>NUCLEOTIDE SEQUENCE [LARGE SCALE MRNA]</scope>
    <source>
        <tissue>Placenta</tissue>
        <tissue>Testis</tissue>
    </source>
</reference>
<keyword id="KW-1267">Proteomics identification</keyword>
<keyword id="KW-1185">Reference proteome</keyword>
<evidence type="ECO:0000255" key="1">
    <source>
        <dbReference type="PROSITE-ProRule" id="PRU00749"/>
    </source>
</evidence>
<evidence type="ECO:0000256" key="2">
    <source>
        <dbReference type="SAM" id="MobiDB-lite"/>
    </source>
</evidence>
<evidence type="ECO:0000305" key="3"/>
<comment type="caution">
    <text evidence="3">Could be the product of a pseudogene.</text>
</comment>
<gene>
    <name type="primary">HERC2P3</name>
</gene>
<sequence length="1158" mass="128943">MHAFCVGQYLEPDQEGVTIPDLGSLSSPLIDTERNLGLLLGLHASYLAMSTPLSPVEIECAKWLQSSIFSGGLQTSQIHYSYNEEKDEDHCSSPGGTPASKSRLCSHRRALGDHSQAFLQAIADNNIQDHNVKDFLCQIERYCRQCHLTTPIMFPPEHPVEEVGRLLLCCLLKHEDLGHVALSLVHAGALGIEQVKHRTLPKSVVDVCRVVYQAKCSLIKTHQEQGRSYKEVCAPVIERLRFLFNELRPAVCNDLSIMSKFKLLSSLPHWRRIAQKIIREPRKKRVPKKPESTDDEEKIGNEESDLEEACILPHSPINVDKRPIAIKSPKDKWQPLLSTVTGVHKYKWLKQNVQGLYPQSPLLSTIAEFALKEEPVDVEKRKCLLKQLERAEVRLEGIDTILKLYLVSKNFLLPSVPYAMFCGWQRLIPEGIDIGEPLTDCLKDVDLIPPFNRMLLEVTFGKLYAWAVQNIRNVLVDASAKFKELGIQPVPLQTITNENPSGPSLGTIPQAHFLLVMLSMLTLQHSANNLDLLLNSGTLALAQTALRLIGPSCDSVEEDMNASAQGASATVLEETRKETAPVQLPVSGPELAAMMKIGTRVMRGVDWKWGDQDRPPPGLGRVIGELGEDGWIRVQWDTGSTNSYRMGKEGNYDLKLAELPAPAQPSAEDSDTEDDSEAEQTERNIHPTAMMFTSTINLLQTLCLSAGVHAEIMQSEATKTLCGLLQMLVYREQHRSWCTLGFVQSIALTLQVCGTLSSLQWITLLMKVVEGHAPFTATSLQRQILAVHLLQAVLPSWDKTERARDMKCLMEKLFDFLGSLLTMCSSDVPLLRESTLRRRRVCPQASLTATHSSTLAEEVVALLHTLHSLTQWNGLINKYINSQLRSITHSFAGRPSKGAQLEDYFPDSENPEVGGLMAVLAVVGGIDGRLCLGGQVVHDDFGEVTMTRITLKGKITVQFSDMRTCHVCPLNQLKPLPAVAFNVNNLPFTEPMLSVWAQLVNLAGSKLEKHKIKKSTKQAFAGQVDLDLLRCQQLKLYILKAGRALFSHQDKLRQILSQPAVQETGTVHTDDGAVVSPDLGDMSPEGPQPPMILLQQLLASATQPSPVKAIFDKQELEERMSRCCFWRRRTTKLEQILLFIRRMNSVCEKENTNATASN</sequence>
<dbReference type="EMBL" id="AC026495">
    <property type="status" value="NOT_ANNOTATED_CDS"/>
    <property type="molecule type" value="Genomic_DNA"/>
</dbReference>
<dbReference type="EMBL" id="BC000975">
    <property type="status" value="NOT_ANNOTATED_CDS"/>
    <property type="molecule type" value="mRNA"/>
</dbReference>
<dbReference type="EMBL" id="BC070076">
    <property type="status" value="NOT_ANNOTATED_CDS"/>
    <property type="molecule type" value="mRNA"/>
</dbReference>
<dbReference type="SMR" id="Q9BVR0"/>
<dbReference type="FunCoup" id="Q9BVR0">
    <property type="interactions" value="1"/>
</dbReference>
<dbReference type="GlyGen" id="Q9BVR0">
    <property type="glycosylation" value="1 site"/>
</dbReference>
<dbReference type="iPTMnet" id="Q9BVR0"/>
<dbReference type="PhosphoSitePlus" id="Q9BVR0"/>
<dbReference type="BioMuta" id="HGNC:4871"/>
<dbReference type="jPOST" id="Q9BVR0"/>
<dbReference type="MassIVE" id="Q9BVR0"/>
<dbReference type="ProteomicsDB" id="79229"/>
<dbReference type="AGR" id="HGNC:4871"/>
<dbReference type="GeneCards" id="HERC2P3"/>
<dbReference type="HGNC" id="HGNC:4871">
    <property type="gene designation" value="HERC2P3"/>
</dbReference>
<dbReference type="neXtProt" id="NX_Q9BVR0"/>
<dbReference type="InParanoid" id="Q9BVR0"/>
<dbReference type="PAN-GO" id="Q9BVR0">
    <property type="GO annotations" value="0 GO annotations based on evolutionary models"/>
</dbReference>
<dbReference type="SignaLink" id="Q9BVR0"/>
<dbReference type="ChiTaRS" id="HERC2P3">
    <property type="organism name" value="human"/>
</dbReference>
<dbReference type="Pharos" id="Q9BVR0">
    <property type="development level" value="Tdark"/>
</dbReference>
<dbReference type="Proteomes" id="UP000005640">
    <property type="component" value="Unplaced"/>
</dbReference>
<dbReference type="RNAct" id="Q9BVR0">
    <property type="molecule type" value="protein"/>
</dbReference>
<dbReference type="GO" id="GO:0005737">
    <property type="term" value="C:cytoplasm"/>
    <property type="evidence" value="ECO:0000318"/>
    <property type="project" value="GO_Central"/>
</dbReference>
<dbReference type="GO" id="GO:0046872">
    <property type="term" value="F:metal ion binding"/>
    <property type="evidence" value="ECO:0007669"/>
    <property type="project" value="InterPro"/>
</dbReference>
<dbReference type="GO" id="GO:0061630">
    <property type="term" value="F:ubiquitin protein ligase activity"/>
    <property type="evidence" value="ECO:0000318"/>
    <property type="project" value="GO_Central"/>
</dbReference>
<dbReference type="GO" id="GO:0016567">
    <property type="term" value="P:protein ubiquitination"/>
    <property type="evidence" value="ECO:0000318"/>
    <property type="project" value="GO_Central"/>
</dbReference>
<dbReference type="FunFam" id="2.30.30.40:FF:000074">
    <property type="entry name" value="E3 ubiquitin-protein ligase HERC2 isoform X1"/>
    <property type="match status" value="1"/>
</dbReference>
<dbReference type="Gene3D" id="2.30.30.40">
    <property type="entry name" value="SH3 Domains"/>
    <property type="match status" value="1"/>
</dbReference>
<dbReference type="InterPro" id="IPR010606">
    <property type="entry name" value="Mib_Herc2"/>
</dbReference>
<dbReference type="InterPro" id="IPR037252">
    <property type="entry name" value="Mib_Herc2_sf"/>
</dbReference>
<dbReference type="PANTHER" id="PTHR24202">
    <property type="entry name" value="E3 UBIQUITIN-PROTEIN LIGASE MIB2"/>
    <property type="match status" value="1"/>
</dbReference>
<dbReference type="PANTHER" id="PTHR24202:SF4">
    <property type="entry name" value="E3 UBIQUITIN-PROTEIN LIGASE MIB2-RELATED"/>
    <property type="match status" value="1"/>
</dbReference>
<dbReference type="Pfam" id="PF06701">
    <property type="entry name" value="MIB_HERC2"/>
    <property type="match status" value="1"/>
</dbReference>
<dbReference type="SUPFAM" id="SSF159034">
    <property type="entry name" value="Mib/herc2 domain-like"/>
    <property type="match status" value="1"/>
</dbReference>
<dbReference type="PROSITE" id="PS51416">
    <property type="entry name" value="MIB_HERC2"/>
    <property type="match status" value="1"/>
</dbReference>
<organism>
    <name type="scientific">Homo sapiens</name>
    <name type="common">Human</name>
    <dbReference type="NCBI Taxonomy" id="9606"/>
    <lineage>
        <taxon>Eukaryota</taxon>
        <taxon>Metazoa</taxon>
        <taxon>Chordata</taxon>
        <taxon>Craniata</taxon>
        <taxon>Vertebrata</taxon>
        <taxon>Euteleostomi</taxon>
        <taxon>Mammalia</taxon>
        <taxon>Eutheria</taxon>
        <taxon>Euarchontoglires</taxon>
        <taxon>Primates</taxon>
        <taxon>Haplorrhini</taxon>
        <taxon>Catarrhini</taxon>
        <taxon>Hominidae</taxon>
        <taxon>Homo</taxon>
    </lineage>
</organism>
<proteinExistence type="uncertain"/>